<accession>Q86A72</accession>
<accession>Q556B5</accession>
<dbReference type="EMBL" id="AAFI02000012">
    <property type="protein sequence ID" value="EAL70283.1"/>
    <property type="molecule type" value="Genomic_DNA"/>
</dbReference>
<dbReference type="RefSeq" id="XP_643895.1">
    <property type="nucleotide sequence ID" value="XM_638803.1"/>
</dbReference>
<dbReference type="SMR" id="Q86A72"/>
<dbReference type="STRING" id="44689.Q86A72"/>
<dbReference type="PaxDb" id="44689-DDB0237510"/>
<dbReference type="EnsemblProtists" id="EAL70283">
    <property type="protein sequence ID" value="EAL70283"/>
    <property type="gene ID" value="DDB_G0274781"/>
</dbReference>
<dbReference type="GeneID" id="8619321"/>
<dbReference type="KEGG" id="ddi:DDB_G0274781"/>
<dbReference type="dictyBase" id="DDB_G0274781"/>
<dbReference type="VEuPathDB" id="AmoebaDB:DDB_G0274781"/>
<dbReference type="eggNOG" id="KOG0044">
    <property type="taxonomic scope" value="Eukaryota"/>
</dbReference>
<dbReference type="HOGENOM" id="CLU_072366_1_0_1"/>
<dbReference type="InParanoid" id="Q86A72"/>
<dbReference type="OMA" id="MFQQAWI"/>
<dbReference type="PhylomeDB" id="Q86A72"/>
<dbReference type="PRO" id="PR:Q86A72"/>
<dbReference type="Proteomes" id="UP000002195">
    <property type="component" value="Chromosome 2"/>
</dbReference>
<dbReference type="GO" id="GO:0005509">
    <property type="term" value="F:calcium ion binding"/>
    <property type="evidence" value="ECO:0000318"/>
    <property type="project" value="GO_Central"/>
</dbReference>
<dbReference type="GO" id="GO:0009966">
    <property type="term" value="P:regulation of signal transduction"/>
    <property type="evidence" value="ECO:0000318"/>
    <property type="project" value="GO_Central"/>
</dbReference>
<dbReference type="CDD" id="cd00051">
    <property type="entry name" value="EFh"/>
    <property type="match status" value="2"/>
</dbReference>
<dbReference type="Gene3D" id="1.10.238.10">
    <property type="entry name" value="EF-hand"/>
    <property type="match status" value="1"/>
</dbReference>
<dbReference type="InterPro" id="IPR011992">
    <property type="entry name" value="EF-hand-dom_pair"/>
</dbReference>
<dbReference type="InterPro" id="IPR018247">
    <property type="entry name" value="EF_Hand_1_Ca_BS"/>
</dbReference>
<dbReference type="InterPro" id="IPR002048">
    <property type="entry name" value="EF_hand_dom"/>
</dbReference>
<dbReference type="InterPro" id="IPR028846">
    <property type="entry name" value="Recoverin"/>
</dbReference>
<dbReference type="PANTHER" id="PTHR23055">
    <property type="entry name" value="CALCIUM BINDING PROTEINS"/>
    <property type="match status" value="1"/>
</dbReference>
<dbReference type="PANTHER" id="PTHR23055:SF183">
    <property type="entry name" value="RECOVERIN FAMILY PROTEIN DDB_G0274781"/>
    <property type="match status" value="1"/>
</dbReference>
<dbReference type="Pfam" id="PF13202">
    <property type="entry name" value="EF-hand_5"/>
    <property type="match status" value="1"/>
</dbReference>
<dbReference type="Pfam" id="PF13499">
    <property type="entry name" value="EF-hand_7"/>
    <property type="match status" value="1"/>
</dbReference>
<dbReference type="PRINTS" id="PR00450">
    <property type="entry name" value="RECOVERIN"/>
</dbReference>
<dbReference type="SMART" id="SM00054">
    <property type="entry name" value="EFh"/>
    <property type="match status" value="3"/>
</dbReference>
<dbReference type="SUPFAM" id="SSF47473">
    <property type="entry name" value="EF-hand"/>
    <property type="match status" value="1"/>
</dbReference>
<dbReference type="PROSITE" id="PS00018">
    <property type="entry name" value="EF_HAND_1"/>
    <property type="match status" value="3"/>
</dbReference>
<dbReference type="PROSITE" id="PS50222">
    <property type="entry name" value="EF_HAND_2"/>
    <property type="match status" value="3"/>
</dbReference>
<comment type="miscellaneous">
    <text evidence="1">Probably binds two or three calcium ions.</text>
</comment>
<comment type="similarity">
    <text evidence="5">Belongs to the recoverin family.</text>
</comment>
<evidence type="ECO:0000250" key="1"/>
<evidence type="ECO:0000255" key="2"/>
<evidence type="ECO:0000255" key="3">
    <source>
        <dbReference type="PROSITE-ProRule" id="PRU00448"/>
    </source>
</evidence>
<evidence type="ECO:0000256" key="4">
    <source>
        <dbReference type="SAM" id="MobiDB-lite"/>
    </source>
</evidence>
<evidence type="ECO:0000305" key="5"/>
<organism>
    <name type="scientific">Dictyostelium discoideum</name>
    <name type="common">Social amoeba</name>
    <dbReference type="NCBI Taxonomy" id="44689"/>
    <lineage>
        <taxon>Eukaryota</taxon>
        <taxon>Amoebozoa</taxon>
        <taxon>Evosea</taxon>
        <taxon>Eumycetozoa</taxon>
        <taxon>Dictyostelia</taxon>
        <taxon>Dictyosteliales</taxon>
        <taxon>Dictyosteliaceae</taxon>
        <taxon>Dictyostelium</taxon>
    </lineage>
</organism>
<keyword id="KW-0106">Calcium</keyword>
<keyword id="KW-0449">Lipoprotein</keyword>
<keyword id="KW-0479">Metal-binding</keyword>
<keyword id="KW-0519">Myristate</keyword>
<keyword id="KW-1185">Reference proteome</keyword>
<keyword id="KW-0677">Repeat</keyword>
<reference key="1">
    <citation type="journal article" date="2002" name="Nature">
        <title>Sequence and analysis of chromosome 2 of Dictyostelium discoideum.</title>
        <authorList>
            <person name="Gloeckner G."/>
            <person name="Eichinger L."/>
            <person name="Szafranski K."/>
            <person name="Pachebat J.A."/>
            <person name="Bankier A.T."/>
            <person name="Dear P.H."/>
            <person name="Lehmann R."/>
            <person name="Baumgart C."/>
            <person name="Parra G."/>
            <person name="Abril J.F."/>
            <person name="Guigo R."/>
            <person name="Kumpf K."/>
            <person name="Tunggal B."/>
            <person name="Cox E.C."/>
            <person name="Quail M.A."/>
            <person name="Platzer M."/>
            <person name="Rosenthal A."/>
            <person name="Noegel A.A."/>
        </authorList>
    </citation>
    <scope>NUCLEOTIDE SEQUENCE [LARGE SCALE GENOMIC DNA]</scope>
    <source>
        <strain>AX4</strain>
    </source>
</reference>
<reference key="2">
    <citation type="journal article" date="2005" name="Nature">
        <title>The genome of the social amoeba Dictyostelium discoideum.</title>
        <authorList>
            <person name="Eichinger L."/>
            <person name="Pachebat J.A."/>
            <person name="Gloeckner G."/>
            <person name="Rajandream M.A."/>
            <person name="Sucgang R."/>
            <person name="Berriman M."/>
            <person name="Song J."/>
            <person name="Olsen R."/>
            <person name="Szafranski K."/>
            <person name="Xu Q."/>
            <person name="Tunggal B."/>
            <person name="Kummerfeld S."/>
            <person name="Madera M."/>
            <person name="Konfortov B.A."/>
            <person name="Rivero F."/>
            <person name="Bankier A.T."/>
            <person name="Lehmann R."/>
            <person name="Hamlin N."/>
            <person name="Davies R."/>
            <person name="Gaudet P."/>
            <person name="Fey P."/>
            <person name="Pilcher K."/>
            <person name="Chen G."/>
            <person name="Saunders D."/>
            <person name="Sodergren E.J."/>
            <person name="Davis P."/>
            <person name="Kerhornou A."/>
            <person name="Nie X."/>
            <person name="Hall N."/>
            <person name="Anjard C."/>
            <person name="Hemphill L."/>
            <person name="Bason N."/>
            <person name="Farbrother P."/>
            <person name="Desany B."/>
            <person name="Just E."/>
            <person name="Morio T."/>
            <person name="Rost R."/>
            <person name="Churcher C.M."/>
            <person name="Cooper J."/>
            <person name="Haydock S."/>
            <person name="van Driessche N."/>
            <person name="Cronin A."/>
            <person name="Goodhead I."/>
            <person name="Muzny D.M."/>
            <person name="Mourier T."/>
            <person name="Pain A."/>
            <person name="Lu M."/>
            <person name="Harper D."/>
            <person name="Lindsay R."/>
            <person name="Hauser H."/>
            <person name="James K.D."/>
            <person name="Quiles M."/>
            <person name="Madan Babu M."/>
            <person name="Saito T."/>
            <person name="Buchrieser C."/>
            <person name="Wardroper A."/>
            <person name="Felder M."/>
            <person name="Thangavelu M."/>
            <person name="Johnson D."/>
            <person name="Knights A."/>
            <person name="Loulseged H."/>
            <person name="Mungall K.L."/>
            <person name="Oliver K."/>
            <person name="Price C."/>
            <person name="Quail M.A."/>
            <person name="Urushihara H."/>
            <person name="Hernandez J."/>
            <person name="Rabbinowitsch E."/>
            <person name="Steffen D."/>
            <person name="Sanders M."/>
            <person name="Ma J."/>
            <person name="Kohara Y."/>
            <person name="Sharp S."/>
            <person name="Simmonds M.N."/>
            <person name="Spiegler S."/>
            <person name="Tivey A."/>
            <person name="Sugano S."/>
            <person name="White B."/>
            <person name="Walker D."/>
            <person name="Woodward J.R."/>
            <person name="Winckler T."/>
            <person name="Tanaka Y."/>
            <person name="Shaulsky G."/>
            <person name="Schleicher M."/>
            <person name="Weinstock G.M."/>
            <person name="Rosenthal A."/>
            <person name="Cox E.C."/>
            <person name="Chisholm R.L."/>
            <person name="Gibbs R.A."/>
            <person name="Loomis W.F."/>
            <person name="Platzer M."/>
            <person name="Kay R.R."/>
            <person name="Williams J.G."/>
            <person name="Dear P.H."/>
            <person name="Noegel A.A."/>
            <person name="Barrell B.G."/>
            <person name="Kuspa A."/>
        </authorList>
    </citation>
    <scope>NUCLEOTIDE SEQUENCE [LARGE SCALE GENOMIC DNA]</scope>
    <source>
        <strain>AX4</strain>
    </source>
</reference>
<sequence>MGNKQGKSPNNSKGGKKYKIDNDVVKQLQESTNFDKVEAKKLYEVFYDLSNGGKEPLNRDRFKEGLTKLESCGLKNLDNSPFGDRLFDLLDTNKDNTVDLQEFISGLSILCKGTAEEKLELSFKAYDIDGNGYITKSELSQMFQQAWISGFKALSYQTNEEVNKDDLNNFSEEMAQIFADGAFSSLDVNGDGKLSFNEFKQFAMSHPKITATLNGSKRDVPITFD</sequence>
<feature type="initiator methionine" description="Removed" evidence="2">
    <location>
        <position position="1"/>
    </location>
</feature>
<feature type="chain" id="PRO_0000362085" description="Recoverin family protein DDB_G0274781">
    <location>
        <begin position="2"/>
        <end position="225"/>
    </location>
</feature>
<feature type="domain" description="EF-hand 1" evidence="3">
    <location>
        <begin position="78"/>
        <end position="113"/>
    </location>
</feature>
<feature type="domain" description="EF-hand 2" evidence="3">
    <location>
        <begin position="114"/>
        <end position="149"/>
    </location>
</feature>
<feature type="domain" description="EF-hand 3" evidence="3">
    <location>
        <begin position="174"/>
        <end position="209"/>
    </location>
</feature>
<feature type="region of interest" description="Disordered" evidence="4">
    <location>
        <begin position="1"/>
        <end position="20"/>
    </location>
</feature>
<feature type="compositionally biased region" description="Low complexity" evidence="4">
    <location>
        <begin position="1"/>
        <end position="13"/>
    </location>
</feature>
<feature type="binding site" evidence="3">
    <location>
        <position position="91"/>
    </location>
    <ligand>
        <name>Ca(2+)</name>
        <dbReference type="ChEBI" id="CHEBI:29108"/>
        <label>1</label>
    </ligand>
</feature>
<feature type="binding site" evidence="3">
    <location>
        <position position="93"/>
    </location>
    <ligand>
        <name>Ca(2+)</name>
        <dbReference type="ChEBI" id="CHEBI:29108"/>
        <label>1</label>
    </ligand>
</feature>
<feature type="binding site" evidence="3">
    <location>
        <position position="95"/>
    </location>
    <ligand>
        <name>Ca(2+)</name>
        <dbReference type="ChEBI" id="CHEBI:29108"/>
        <label>1</label>
    </ligand>
</feature>
<feature type="binding site" evidence="3">
    <location>
        <position position="97"/>
    </location>
    <ligand>
        <name>Ca(2+)</name>
        <dbReference type="ChEBI" id="CHEBI:29108"/>
        <label>1</label>
    </ligand>
</feature>
<feature type="binding site" evidence="3">
    <location>
        <position position="102"/>
    </location>
    <ligand>
        <name>Ca(2+)</name>
        <dbReference type="ChEBI" id="CHEBI:29108"/>
        <label>1</label>
    </ligand>
</feature>
<feature type="binding site" evidence="3">
    <location>
        <position position="127"/>
    </location>
    <ligand>
        <name>Ca(2+)</name>
        <dbReference type="ChEBI" id="CHEBI:29108"/>
        <label>2</label>
    </ligand>
</feature>
<feature type="binding site" evidence="3">
    <location>
        <position position="129"/>
    </location>
    <ligand>
        <name>Ca(2+)</name>
        <dbReference type="ChEBI" id="CHEBI:29108"/>
        <label>2</label>
    </ligand>
</feature>
<feature type="binding site" evidence="3">
    <location>
        <position position="131"/>
    </location>
    <ligand>
        <name>Ca(2+)</name>
        <dbReference type="ChEBI" id="CHEBI:29108"/>
        <label>2</label>
    </ligand>
</feature>
<feature type="binding site" evidence="3">
    <location>
        <position position="133"/>
    </location>
    <ligand>
        <name>Ca(2+)</name>
        <dbReference type="ChEBI" id="CHEBI:29108"/>
        <label>2</label>
    </ligand>
</feature>
<feature type="binding site" evidence="3">
    <location>
        <position position="138"/>
    </location>
    <ligand>
        <name>Ca(2+)</name>
        <dbReference type="ChEBI" id="CHEBI:29108"/>
        <label>2</label>
    </ligand>
</feature>
<feature type="binding site" evidence="3">
    <location>
        <position position="187"/>
    </location>
    <ligand>
        <name>Ca(2+)</name>
        <dbReference type="ChEBI" id="CHEBI:29108"/>
        <label>3</label>
    </ligand>
</feature>
<feature type="binding site" evidence="3">
    <location>
        <position position="189"/>
    </location>
    <ligand>
        <name>Ca(2+)</name>
        <dbReference type="ChEBI" id="CHEBI:29108"/>
        <label>3</label>
    </ligand>
</feature>
<feature type="binding site" evidence="3">
    <location>
        <position position="191"/>
    </location>
    <ligand>
        <name>Ca(2+)</name>
        <dbReference type="ChEBI" id="CHEBI:29108"/>
        <label>3</label>
    </ligand>
</feature>
<feature type="binding site" evidence="3">
    <location>
        <position position="193"/>
    </location>
    <ligand>
        <name>Ca(2+)</name>
        <dbReference type="ChEBI" id="CHEBI:29108"/>
        <label>3</label>
    </ligand>
</feature>
<feature type="binding site" evidence="3">
    <location>
        <position position="198"/>
    </location>
    <ligand>
        <name>Ca(2+)</name>
        <dbReference type="ChEBI" id="CHEBI:29108"/>
        <label>3</label>
    </ligand>
</feature>
<feature type="lipid moiety-binding region" description="N-myristoyl glycine" evidence="2">
    <location>
        <position position="2"/>
    </location>
</feature>
<gene>
    <name type="ORF">DDB_G0274781</name>
</gene>
<proteinExistence type="inferred from homology"/>
<name>Y4781_DICDI</name>
<protein>
    <recommendedName>
        <fullName>Recoverin family protein DDB_G0274781</fullName>
    </recommendedName>
</protein>